<gene>
    <name evidence="1" type="primary">smdt1</name>
    <name evidence="1" type="synonym">emre</name>
</gene>
<accession>Q5XG64</accession>
<dbReference type="EMBL" id="BC084597">
    <property type="protein sequence ID" value="AAH84597.1"/>
    <property type="molecule type" value="mRNA"/>
</dbReference>
<dbReference type="RefSeq" id="NP_001088361.1">
    <property type="nucleotide sequence ID" value="NM_001094892.1"/>
</dbReference>
<dbReference type="SMR" id="Q5XG64"/>
<dbReference type="DNASU" id="495205"/>
<dbReference type="GeneID" id="495205"/>
<dbReference type="KEGG" id="xla:495205"/>
<dbReference type="AGR" id="Xenbase:XB-GENE-1002280"/>
<dbReference type="CTD" id="495205"/>
<dbReference type="Xenbase" id="XB-GENE-1002280">
    <property type="gene designation" value="smdt1.S"/>
</dbReference>
<dbReference type="OMA" id="NISKHEH"/>
<dbReference type="OrthoDB" id="10039145at2759"/>
<dbReference type="Proteomes" id="UP000186698">
    <property type="component" value="Chromosome 4S"/>
</dbReference>
<dbReference type="Bgee" id="495205">
    <property type="expression patterns" value="Expressed in testis and 19 other cell types or tissues"/>
</dbReference>
<dbReference type="GO" id="GO:0005743">
    <property type="term" value="C:mitochondrial inner membrane"/>
    <property type="evidence" value="ECO:0000250"/>
    <property type="project" value="UniProtKB"/>
</dbReference>
<dbReference type="GO" id="GO:1990246">
    <property type="term" value="C:uniplex complex"/>
    <property type="evidence" value="ECO:0000250"/>
    <property type="project" value="UniProtKB"/>
</dbReference>
<dbReference type="GO" id="GO:0099103">
    <property type="term" value="F:channel activator activity"/>
    <property type="evidence" value="ECO:0000250"/>
    <property type="project" value="UniProtKB"/>
</dbReference>
<dbReference type="GO" id="GO:0030674">
    <property type="term" value="F:protein-macromolecule adaptor activity"/>
    <property type="evidence" value="ECO:0000250"/>
    <property type="project" value="UniProtKB"/>
</dbReference>
<dbReference type="GO" id="GO:0036444">
    <property type="term" value="P:calcium import into the mitochondrion"/>
    <property type="evidence" value="ECO:0000250"/>
    <property type="project" value="UniProtKB"/>
</dbReference>
<dbReference type="GO" id="GO:0051560">
    <property type="term" value="P:mitochondrial calcium ion homeostasis"/>
    <property type="evidence" value="ECO:0000250"/>
    <property type="project" value="UniProtKB"/>
</dbReference>
<dbReference type="GO" id="GO:0006851">
    <property type="term" value="P:mitochondrial calcium ion transmembrane transport"/>
    <property type="evidence" value="ECO:0000250"/>
    <property type="project" value="UniProtKB"/>
</dbReference>
<dbReference type="InterPro" id="IPR018782">
    <property type="entry name" value="MCU_reg"/>
</dbReference>
<dbReference type="PANTHER" id="PTHR33904">
    <property type="entry name" value="ESSENTIAL MCU REGULATOR, MITOCHONDRIAL"/>
    <property type="match status" value="1"/>
</dbReference>
<dbReference type="PANTHER" id="PTHR33904:SF1">
    <property type="entry name" value="ESSENTIAL MCU REGULATOR, MITOCHONDRIAL"/>
    <property type="match status" value="1"/>
</dbReference>
<dbReference type="Pfam" id="PF10161">
    <property type="entry name" value="DDDD"/>
    <property type="match status" value="1"/>
</dbReference>
<keyword id="KW-0106">Calcium</keyword>
<keyword id="KW-0109">Calcium transport</keyword>
<keyword id="KW-0406">Ion transport</keyword>
<keyword id="KW-0472">Membrane</keyword>
<keyword id="KW-0496">Mitochondrion</keyword>
<keyword id="KW-0999">Mitochondrion inner membrane</keyword>
<keyword id="KW-1185">Reference proteome</keyword>
<keyword id="KW-0809">Transit peptide</keyword>
<keyword id="KW-0812">Transmembrane</keyword>
<keyword id="KW-1133">Transmembrane helix</keyword>
<keyword id="KW-0813">Transport</keyword>
<reference key="1">
    <citation type="submission" date="2004-10" db="EMBL/GenBank/DDBJ databases">
        <authorList>
            <consortium name="NIH - Xenopus Gene Collection (XGC) project"/>
        </authorList>
    </citation>
    <scope>NUCLEOTIDE SEQUENCE [LARGE SCALE MRNA]</scope>
    <source>
        <tissue>Liver</tissue>
    </source>
</reference>
<feature type="transit peptide" description="Mitochondrion" evidence="2">
    <location>
        <begin position="1"/>
        <end position="37"/>
    </location>
</feature>
<feature type="chain" id="PRO_0000296323" description="Essential MCU regulator, mitochondrial">
    <location>
        <begin position="38"/>
        <end position="97"/>
    </location>
</feature>
<feature type="topological domain" description="Mitochondrial matrix" evidence="3">
    <location>
        <begin position="38"/>
        <end position="55"/>
    </location>
</feature>
<feature type="transmembrane region" description="Helical" evidence="1">
    <location>
        <begin position="56"/>
        <end position="75"/>
    </location>
</feature>
<feature type="topological domain" description="Mitochondrial intermembrane" evidence="3">
    <location>
        <begin position="76"/>
        <end position="97"/>
    </location>
</feature>
<protein>
    <recommendedName>
        <fullName evidence="1">Essential MCU regulator, mitochondrial</fullName>
    </recommendedName>
    <alternativeName>
        <fullName evidence="1">Single-pass membrane protein with aspartate-rich tail 1, mitochondrial</fullName>
    </alternativeName>
</protein>
<sequence length="97" mass="10273">MAARMGVLSVAGFRAAARAGGLLARPKQSTAVVPCRTVIASSAGAILPKPEKVSFGLLRVFTVVIPFLYIGTLISKNFAAVLEEHDIFVPEDDDDDD</sequence>
<comment type="function">
    <text evidence="1">Essential regulatory subunit of the mitochondrial calcium uniporter complex (uniplex), a complex that mediates calcium uptake into mitochondria. Required to bridge the calcium-sensing proteins micu1 with the calcium-conducting subunit mcu. Acts by mediating activation of mcu and retention of micu1 to the mcu pore, in order to ensure tight regulation of the uniplex complex and appropriate responses to intracellular calcium signaling.</text>
</comment>
<comment type="subunit">
    <text evidence="1">Component of the uniplex complex.</text>
</comment>
<comment type="subcellular location">
    <subcellularLocation>
        <location evidence="1">Mitochondrion inner membrane</location>
        <topology evidence="1">Single-pass membrane protein</topology>
    </subcellularLocation>
</comment>
<comment type="similarity">
    <text evidence="3">Belongs to the SMDT1/EMRE family.</text>
</comment>
<name>EMRE_XENLA</name>
<organism>
    <name type="scientific">Xenopus laevis</name>
    <name type="common">African clawed frog</name>
    <dbReference type="NCBI Taxonomy" id="8355"/>
    <lineage>
        <taxon>Eukaryota</taxon>
        <taxon>Metazoa</taxon>
        <taxon>Chordata</taxon>
        <taxon>Craniata</taxon>
        <taxon>Vertebrata</taxon>
        <taxon>Euteleostomi</taxon>
        <taxon>Amphibia</taxon>
        <taxon>Batrachia</taxon>
        <taxon>Anura</taxon>
        <taxon>Pipoidea</taxon>
        <taxon>Pipidae</taxon>
        <taxon>Xenopodinae</taxon>
        <taxon>Xenopus</taxon>
        <taxon>Xenopus</taxon>
    </lineage>
</organism>
<proteinExistence type="inferred from homology"/>
<evidence type="ECO:0000250" key="1">
    <source>
        <dbReference type="UniProtKB" id="Q9H4I9"/>
    </source>
</evidence>
<evidence type="ECO:0000255" key="2"/>
<evidence type="ECO:0000305" key="3"/>